<sequence>MPPSIPVPSIVTRAIPSLARAASTTTKSTPSKEHHVHSYSPEVLPLGYAVASTHASIKKKTGALDLGILVSTTDKPASAAACLTRNVFKAAPVTVTTQLLQSGGGRARGFIVNSGCANAVTGKKGLEDAWEMSNTVTSQLPPGQRGIGTLVMSTGVIGQPLPISSIISKIPELVRSLDDSPKSWLDLSKSFMTTDTFPKLRAKSFRLGERLVRIAGIDKGAGMIAPSMGPPQPPHATLLGVIATDAAISPPALQSALNYAVDRSFNNITVDGDMSTNDSIICLANGAAGKLETQGRETAESMEEITEDGHPEEYKVFREELRSFAEELAQLVVRDGEGATKFVTIRVKNAPSYETAQAVAKSIANSSLFKTAMYGEDANWGRILCAVGYTPTAQAIIPNHVSVSFIPSANVSDPTPLRLLTNGEPEANIDEDRASVILAEEDLEVEVDLGDGHEEAKVWTCDFSHEYVTINGSYRS</sequence>
<comment type="function">
    <text evidence="1">Catalyzes two activities which are involved in the cyclic version of arginine biosynthesis: the synthesis of acetylglutamate from glutamate and acetyl-CoA, and of ornithine by transacetylation between acetylornithine and glutamate.</text>
</comment>
<comment type="catalytic activity">
    <reaction evidence="1">
        <text>N(2)-acetyl-L-ornithine + L-glutamate = N-acetyl-L-glutamate + L-ornithine</text>
        <dbReference type="Rhea" id="RHEA:15349"/>
        <dbReference type="ChEBI" id="CHEBI:29985"/>
        <dbReference type="ChEBI" id="CHEBI:44337"/>
        <dbReference type="ChEBI" id="CHEBI:46911"/>
        <dbReference type="ChEBI" id="CHEBI:57805"/>
        <dbReference type="EC" id="2.3.1.35"/>
    </reaction>
</comment>
<comment type="catalytic activity">
    <reaction evidence="1">
        <text>L-glutamate + acetyl-CoA = N-acetyl-L-glutamate + CoA + H(+)</text>
        <dbReference type="Rhea" id="RHEA:24292"/>
        <dbReference type="ChEBI" id="CHEBI:15378"/>
        <dbReference type="ChEBI" id="CHEBI:29985"/>
        <dbReference type="ChEBI" id="CHEBI:44337"/>
        <dbReference type="ChEBI" id="CHEBI:57287"/>
        <dbReference type="ChEBI" id="CHEBI:57288"/>
        <dbReference type="EC" id="2.3.1.1"/>
    </reaction>
</comment>
<comment type="pathway">
    <text evidence="1">Amino-acid biosynthesis; L-arginine biosynthesis; L-ornithine and N-acetyl-L-glutamate from L-glutamate and N(2)-acetyl-L-ornithine (cyclic): step 1/1.</text>
</comment>
<comment type="pathway">
    <text evidence="1">Amino-acid biosynthesis; L-arginine biosynthesis; N(2)-acetyl-L-ornithine from L-glutamate: step 1/4.</text>
</comment>
<comment type="subunit">
    <text evidence="1">Heterodimer of an alpha and a beta chain.</text>
</comment>
<comment type="subcellular location">
    <subcellularLocation>
        <location evidence="1">Mitochondrion matrix</location>
    </subcellularLocation>
</comment>
<comment type="PTM">
    <text evidence="1">The alpha and beta chains are autoproteolytically processed from a single precursor protein within the mitochondrion.</text>
</comment>
<comment type="miscellaneous">
    <text evidence="1">This protein may be expected to contain an N-terminal transit peptide but none has been predicted.</text>
</comment>
<comment type="similarity">
    <text evidence="1">Belongs to the ArgJ family.</text>
</comment>
<dbReference type="EC" id="2.3.1.35" evidence="1"/>
<dbReference type="EC" id="2.3.1.1" evidence="1"/>
<dbReference type="EMBL" id="AE017344">
    <property type="protein sequence ID" value="AAW42895.1"/>
    <property type="molecule type" value="Genomic_DNA"/>
</dbReference>
<dbReference type="RefSeq" id="XP_570202.1">
    <property type="nucleotide sequence ID" value="XM_570202.2"/>
</dbReference>
<dbReference type="SMR" id="P0CM20"/>
<dbReference type="FunCoup" id="P0CM20">
    <property type="interactions" value="160"/>
</dbReference>
<dbReference type="STRING" id="214684.P0CM20"/>
<dbReference type="MEROPS" id="T05.001"/>
<dbReference type="PaxDb" id="214684-P0CM20"/>
<dbReference type="EnsemblFungi" id="AAW42895">
    <property type="protein sequence ID" value="AAW42895"/>
    <property type="gene ID" value="CND03570"/>
</dbReference>
<dbReference type="GeneID" id="3257152"/>
<dbReference type="KEGG" id="cne:CND03570"/>
<dbReference type="VEuPathDB" id="FungiDB:CND03570"/>
<dbReference type="eggNOG" id="KOG2786">
    <property type="taxonomic scope" value="Eukaryota"/>
</dbReference>
<dbReference type="HOGENOM" id="CLU_027172_1_0_1"/>
<dbReference type="InParanoid" id="P0CM20"/>
<dbReference type="OMA" id="WGRIVMA"/>
<dbReference type="OrthoDB" id="2017946at2759"/>
<dbReference type="UniPathway" id="UPA00068">
    <property type="reaction ID" value="UER00106"/>
</dbReference>
<dbReference type="UniPathway" id="UPA00068">
    <property type="reaction ID" value="UER00111"/>
</dbReference>
<dbReference type="Proteomes" id="UP000002149">
    <property type="component" value="Chromosome 4"/>
</dbReference>
<dbReference type="GO" id="GO:0005759">
    <property type="term" value="C:mitochondrial matrix"/>
    <property type="evidence" value="ECO:0000318"/>
    <property type="project" value="GO_Central"/>
</dbReference>
<dbReference type="GO" id="GO:0004358">
    <property type="term" value="F:glutamate N-acetyltransferase activity"/>
    <property type="evidence" value="ECO:0007669"/>
    <property type="project" value="UniProtKB-UniRule"/>
</dbReference>
<dbReference type="GO" id="GO:0004042">
    <property type="term" value="F:L-glutamate N-acetyltransferase activity"/>
    <property type="evidence" value="ECO:0000318"/>
    <property type="project" value="GO_Central"/>
</dbReference>
<dbReference type="GO" id="GO:0006526">
    <property type="term" value="P:L-arginine biosynthetic process"/>
    <property type="evidence" value="ECO:0007669"/>
    <property type="project" value="UniProtKB-UniRule"/>
</dbReference>
<dbReference type="GO" id="GO:0006592">
    <property type="term" value="P:ornithine biosynthetic process"/>
    <property type="evidence" value="ECO:0000318"/>
    <property type="project" value="GO_Central"/>
</dbReference>
<dbReference type="CDD" id="cd02152">
    <property type="entry name" value="OAT"/>
    <property type="match status" value="1"/>
</dbReference>
<dbReference type="FunFam" id="3.10.20.340:FF:000002">
    <property type="entry name" value="Arginine biosynthesis bifunctional protein ArgJ, mitochondrial"/>
    <property type="match status" value="1"/>
</dbReference>
<dbReference type="FunFam" id="3.30.2330.10:FF:000001">
    <property type="entry name" value="Arginine biosynthesis bifunctional protein ArgJ, mitochondrial"/>
    <property type="match status" value="1"/>
</dbReference>
<dbReference type="FunFam" id="3.60.70.12:FF:000002">
    <property type="entry name" value="Arginine biosynthesis bifunctional protein ArgJ, mitochondrial"/>
    <property type="match status" value="1"/>
</dbReference>
<dbReference type="Gene3D" id="3.30.2330.10">
    <property type="entry name" value="arginine biosynthesis bifunctional protein suprefamily"/>
    <property type="match status" value="1"/>
</dbReference>
<dbReference type="Gene3D" id="3.10.20.340">
    <property type="entry name" value="ArgJ beta chain, C-terminal domain"/>
    <property type="match status" value="1"/>
</dbReference>
<dbReference type="Gene3D" id="3.60.70.12">
    <property type="entry name" value="L-amino peptidase D-ALA esterase/amidase"/>
    <property type="match status" value="1"/>
</dbReference>
<dbReference type="HAMAP" id="MF_01106">
    <property type="entry name" value="ArgJ"/>
    <property type="match status" value="1"/>
</dbReference>
<dbReference type="InterPro" id="IPR002813">
    <property type="entry name" value="Arg_biosynth_ArgJ"/>
</dbReference>
<dbReference type="InterPro" id="IPR016117">
    <property type="entry name" value="ArgJ-like_dom_sf"/>
</dbReference>
<dbReference type="InterPro" id="IPR042195">
    <property type="entry name" value="ArgJ_beta_C"/>
</dbReference>
<dbReference type="NCBIfam" id="TIGR00120">
    <property type="entry name" value="ArgJ"/>
    <property type="match status" value="1"/>
</dbReference>
<dbReference type="NCBIfam" id="NF003802">
    <property type="entry name" value="PRK05388.1"/>
    <property type="match status" value="1"/>
</dbReference>
<dbReference type="PANTHER" id="PTHR23100">
    <property type="entry name" value="ARGININE BIOSYNTHESIS BIFUNCTIONAL PROTEIN ARGJ"/>
    <property type="match status" value="1"/>
</dbReference>
<dbReference type="PANTHER" id="PTHR23100:SF0">
    <property type="entry name" value="ARGININE BIOSYNTHESIS BIFUNCTIONAL PROTEIN ARGJ, MITOCHONDRIAL"/>
    <property type="match status" value="1"/>
</dbReference>
<dbReference type="Pfam" id="PF01960">
    <property type="entry name" value="ArgJ"/>
    <property type="match status" value="1"/>
</dbReference>
<dbReference type="SUPFAM" id="SSF56266">
    <property type="entry name" value="DmpA/ArgJ-like"/>
    <property type="match status" value="1"/>
</dbReference>
<reference key="1">
    <citation type="journal article" date="2005" name="Science">
        <title>The genome of the basidiomycetous yeast and human pathogen Cryptococcus neoformans.</title>
        <authorList>
            <person name="Loftus B.J."/>
            <person name="Fung E."/>
            <person name="Roncaglia P."/>
            <person name="Rowley D."/>
            <person name="Amedeo P."/>
            <person name="Bruno D."/>
            <person name="Vamathevan J."/>
            <person name="Miranda M."/>
            <person name="Anderson I.J."/>
            <person name="Fraser J.A."/>
            <person name="Allen J.E."/>
            <person name="Bosdet I.E."/>
            <person name="Brent M.R."/>
            <person name="Chiu R."/>
            <person name="Doering T.L."/>
            <person name="Donlin M.J."/>
            <person name="D'Souza C.A."/>
            <person name="Fox D.S."/>
            <person name="Grinberg V."/>
            <person name="Fu J."/>
            <person name="Fukushima M."/>
            <person name="Haas B.J."/>
            <person name="Huang J.C."/>
            <person name="Janbon G."/>
            <person name="Jones S.J.M."/>
            <person name="Koo H.L."/>
            <person name="Krzywinski M.I."/>
            <person name="Kwon-Chung K.J."/>
            <person name="Lengeler K.B."/>
            <person name="Maiti R."/>
            <person name="Marra M.A."/>
            <person name="Marra R.E."/>
            <person name="Mathewson C.A."/>
            <person name="Mitchell T.G."/>
            <person name="Pertea M."/>
            <person name="Riggs F.R."/>
            <person name="Salzberg S.L."/>
            <person name="Schein J.E."/>
            <person name="Shvartsbeyn A."/>
            <person name="Shin H."/>
            <person name="Shumway M."/>
            <person name="Specht C.A."/>
            <person name="Suh B.B."/>
            <person name="Tenney A."/>
            <person name="Utterback T.R."/>
            <person name="Wickes B.L."/>
            <person name="Wortman J.R."/>
            <person name="Wye N.H."/>
            <person name="Kronstad J.W."/>
            <person name="Lodge J.K."/>
            <person name="Heitman J."/>
            <person name="Davis R.W."/>
            <person name="Fraser C.M."/>
            <person name="Hyman R.W."/>
        </authorList>
    </citation>
    <scope>NUCLEOTIDE SEQUENCE [LARGE SCALE GENOMIC DNA]</scope>
    <source>
        <strain>JEC21 / ATCC MYA-565</strain>
    </source>
</reference>
<proteinExistence type="inferred from homology"/>
<keyword id="KW-0012">Acyltransferase</keyword>
<keyword id="KW-0028">Amino-acid biosynthesis</keyword>
<keyword id="KW-0055">Arginine biosynthesis</keyword>
<keyword id="KW-0068">Autocatalytic cleavage</keyword>
<keyword id="KW-0496">Mitochondrion</keyword>
<keyword id="KW-0511">Multifunctional enzyme</keyword>
<keyword id="KW-1185">Reference proteome</keyword>
<keyword id="KW-0808">Transferase</keyword>
<feature type="chain" id="PRO_0000398048" description="Arginine biosynthesis bifunctional protein ArgJ alpha chain" evidence="1">
    <location>
        <begin position="1"/>
        <end position="236"/>
    </location>
</feature>
<feature type="chain" id="PRO_0000398049" description="Arginine biosynthesis bifunctional protein ArgJ beta chain" evidence="1">
    <location>
        <begin position="237"/>
        <end position="476"/>
    </location>
</feature>
<feature type="active site" description="Nucleophile" evidence="1">
    <location>
        <position position="237"/>
    </location>
</feature>
<feature type="binding site" evidence="1">
    <location>
        <position position="193"/>
    </location>
    <ligand>
        <name>substrate</name>
    </ligand>
</feature>
<feature type="binding site" evidence="1">
    <location>
        <position position="219"/>
    </location>
    <ligand>
        <name>substrate</name>
    </ligand>
</feature>
<feature type="binding site" evidence="1">
    <location>
        <position position="237"/>
    </location>
    <ligand>
        <name>substrate</name>
    </ligand>
</feature>
<feature type="binding site" evidence="1">
    <location>
        <position position="337"/>
    </location>
    <ligand>
        <name>substrate</name>
    </ligand>
</feature>
<feature type="binding site" evidence="1">
    <location>
        <position position="471"/>
    </location>
    <ligand>
        <name>substrate</name>
    </ligand>
</feature>
<feature type="binding site" evidence="1">
    <location>
        <position position="476"/>
    </location>
    <ligand>
        <name>substrate</name>
    </ligand>
</feature>
<feature type="site" description="Involved in the stabilization of negative charge on the oxyanion by the formation of the oxyanion hole" evidence="1">
    <location>
        <position position="154"/>
    </location>
</feature>
<feature type="site" description="Involved in the stabilization of negative charge on the oxyanion by the formation of the oxyanion hole" evidence="1">
    <location>
        <position position="155"/>
    </location>
</feature>
<feature type="site" description="Cleavage; by autolysis" evidence="1">
    <location>
        <begin position="236"/>
        <end position="237"/>
    </location>
</feature>
<organism>
    <name type="scientific">Cryptococcus neoformans var. neoformans serotype D (strain JEC21 / ATCC MYA-565)</name>
    <name type="common">Filobasidiella neoformans</name>
    <dbReference type="NCBI Taxonomy" id="214684"/>
    <lineage>
        <taxon>Eukaryota</taxon>
        <taxon>Fungi</taxon>
        <taxon>Dikarya</taxon>
        <taxon>Basidiomycota</taxon>
        <taxon>Agaricomycotina</taxon>
        <taxon>Tremellomycetes</taxon>
        <taxon>Tremellales</taxon>
        <taxon>Cryptococcaceae</taxon>
        <taxon>Cryptococcus</taxon>
        <taxon>Cryptococcus neoformans species complex</taxon>
    </lineage>
</organism>
<gene>
    <name type="ordered locus">CND03570</name>
</gene>
<accession>P0CM20</accession>
<accession>Q55U28</accession>
<accession>Q5KIB4</accession>
<protein>
    <recommendedName>
        <fullName evidence="1">Arginine biosynthesis bifunctional protein ArgJ, mitochondrial</fullName>
    </recommendedName>
    <domain>
        <recommendedName>
            <fullName evidence="1">Glutamate N-acetyltransferase</fullName>
            <shortName evidence="1">GAT</shortName>
            <ecNumber evidence="1">2.3.1.35</ecNumber>
        </recommendedName>
        <alternativeName>
            <fullName evidence="1">Ornithine acetyltransferase</fullName>
            <shortName evidence="1">OATase</shortName>
        </alternativeName>
        <alternativeName>
            <fullName evidence="1">Ornithine transacetylase</fullName>
        </alternativeName>
    </domain>
    <domain>
        <recommendedName>
            <fullName evidence="1">Amino-acid acetyltransferase</fullName>
            <ecNumber evidence="1">2.3.1.1</ecNumber>
        </recommendedName>
        <alternativeName>
            <fullName evidence="1">N-acetylglutamate synthase</fullName>
            <shortName evidence="1">AGS</shortName>
        </alternativeName>
    </domain>
    <component>
        <recommendedName>
            <fullName evidence="1">Arginine biosynthesis bifunctional protein ArgJ alpha chain</fullName>
        </recommendedName>
    </component>
    <component>
        <recommendedName>
            <fullName evidence="1">Arginine biosynthesis bifunctional protein ArgJ beta chain</fullName>
        </recommendedName>
    </component>
</protein>
<evidence type="ECO:0000255" key="1">
    <source>
        <dbReference type="HAMAP-Rule" id="MF_03124"/>
    </source>
</evidence>
<name>ARGJ_CRYNJ</name>